<sequence length="294" mass="32390">MFRGVGTAIVTPFKNGELDLESYERLVRYQLENGVNALIVLGTTGESPTVNEDEREKLVSRTLEIVDGKIPVIVGAGTNSTEKTLKLVKQAEKLGANGVLVVTPYYNKPTQEGLYQHYKYISERTDLGIVVYNVPGRTGVNVLPETAARIAADLKNVVGIKEANPDIDQIDRTVSLTKQARSDFMVWSGNDDRTFYLLCAGGDGVISVVSNVAPKQMVELCAEYFSGNLEKSREVHRKLRPLMKALFVETNPIPVKAALNLMGFIENELRLPLVPASEKTVELLRNVLKESGLL</sequence>
<evidence type="ECO:0000255" key="1">
    <source>
        <dbReference type="HAMAP-Rule" id="MF_00418"/>
    </source>
</evidence>
<evidence type="ECO:0000269" key="2">
    <source>
    </source>
</evidence>
<evidence type="ECO:0000269" key="3">
    <source>
    </source>
</evidence>
<evidence type="ECO:0000305" key="4"/>
<evidence type="ECO:0000305" key="5">
    <source>
    </source>
</evidence>
<evidence type="ECO:0007829" key="6">
    <source>
        <dbReference type="PDB" id="1O5K"/>
    </source>
</evidence>
<keyword id="KW-0002">3D-structure</keyword>
<keyword id="KW-0028">Amino-acid biosynthesis</keyword>
<keyword id="KW-0963">Cytoplasm</keyword>
<keyword id="KW-0220">Diaminopimelate biosynthesis</keyword>
<keyword id="KW-0456">Lyase</keyword>
<keyword id="KW-0457">Lysine biosynthesis</keyword>
<keyword id="KW-1185">Reference proteome</keyword>
<keyword id="KW-0704">Schiff base</keyword>
<feature type="chain" id="PRO_0000103175" description="4-hydroxy-tetrahydrodipicolinate synthase">
    <location>
        <begin position="1"/>
        <end position="294"/>
    </location>
</feature>
<feature type="active site" description="Proton donor/acceptor" evidence="1">
    <location>
        <position position="132"/>
    </location>
</feature>
<feature type="active site" description="Schiff-base intermediate with substrate" evidence="1">
    <location>
        <position position="161"/>
    </location>
</feature>
<feature type="binding site" evidence="1">
    <location>
        <position position="44"/>
    </location>
    <ligand>
        <name>pyruvate</name>
        <dbReference type="ChEBI" id="CHEBI:15361"/>
    </ligand>
</feature>
<feature type="binding site" evidence="1">
    <location>
        <position position="206"/>
    </location>
    <ligand>
        <name>pyruvate</name>
        <dbReference type="ChEBI" id="CHEBI:15361"/>
    </ligand>
</feature>
<feature type="site" description="Part of a proton relay during catalysis" evidence="1">
    <location>
        <position position="43"/>
    </location>
</feature>
<feature type="site" description="Part of a proton relay during catalysis" evidence="1">
    <location>
        <position position="106"/>
    </location>
</feature>
<feature type="mutagenesis site" description="Exists as a monomer in solution. Decreased activity and substrate affinity. Reduced thermal stability." evidence="3">
    <original>DID</original>
    <variation>AAA</variation>
    <location>
        <begin position="166"/>
        <end position="168"/>
    </location>
</feature>
<feature type="strand" evidence="6">
    <location>
        <begin position="3"/>
        <end position="8"/>
    </location>
</feature>
<feature type="helix" evidence="6">
    <location>
        <begin position="20"/>
        <end position="32"/>
    </location>
</feature>
<feature type="strand" evidence="6">
    <location>
        <begin position="37"/>
        <end position="42"/>
    </location>
</feature>
<feature type="helix" evidence="6">
    <location>
        <begin position="43"/>
        <end position="45"/>
    </location>
</feature>
<feature type="helix" evidence="6">
    <location>
        <begin position="47"/>
        <end position="49"/>
    </location>
</feature>
<feature type="helix" evidence="6">
    <location>
        <begin position="52"/>
        <end position="66"/>
    </location>
</feature>
<feature type="strand" evidence="6">
    <location>
        <begin position="72"/>
        <end position="75"/>
    </location>
</feature>
<feature type="helix" evidence="6">
    <location>
        <begin position="81"/>
        <end position="94"/>
    </location>
</feature>
<feature type="strand" evidence="6">
    <location>
        <begin position="97"/>
        <end position="102"/>
    </location>
</feature>
<feature type="helix" evidence="6">
    <location>
        <begin position="111"/>
        <end position="122"/>
    </location>
</feature>
<feature type="strand" evidence="6">
    <location>
        <begin position="129"/>
        <end position="133"/>
    </location>
</feature>
<feature type="helix" evidence="6">
    <location>
        <begin position="135"/>
        <end position="138"/>
    </location>
</feature>
<feature type="helix" evidence="6">
    <location>
        <begin position="144"/>
        <end position="153"/>
    </location>
</feature>
<feature type="strand" evidence="6">
    <location>
        <begin position="157"/>
        <end position="162"/>
    </location>
</feature>
<feature type="helix" evidence="6">
    <location>
        <begin position="167"/>
        <end position="180"/>
    </location>
</feature>
<feature type="strand" evidence="6">
    <location>
        <begin position="185"/>
        <end position="190"/>
    </location>
</feature>
<feature type="helix" evidence="6">
    <location>
        <begin position="191"/>
        <end position="193"/>
    </location>
</feature>
<feature type="helix" evidence="6">
    <location>
        <begin position="194"/>
        <end position="200"/>
    </location>
</feature>
<feature type="strand" evidence="6">
    <location>
        <begin position="204"/>
        <end position="208"/>
    </location>
</feature>
<feature type="helix" evidence="6">
    <location>
        <begin position="209"/>
        <end position="211"/>
    </location>
</feature>
<feature type="helix" evidence="6">
    <location>
        <begin position="214"/>
        <end position="225"/>
    </location>
</feature>
<feature type="helix" evidence="6">
    <location>
        <begin position="229"/>
        <end position="245"/>
    </location>
</feature>
<feature type="strand" evidence="6">
    <location>
        <begin position="248"/>
        <end position="250"/>
    </location>
</feature>
<feature type="helix" evidence="6">
    <location>
        <begin position="253"/>
        <end position="261"/>
    </location>
</feature>
<feature type="helix" evidence="6">
    <location>
        <begin position="278"/>
        <end position="290"/>
    </location>
</feature>
<name>DAPA_THEMA</name>
<proteinExistence type="evidence at protein level"/>
<reference key="1">
    <citation type="journal article" date="1999" name="Nature">
        <title>Evidence for lateral gene transfer between Archaea and Bacteria from genome sequence of Thermotoga maritima.</title>
        <authorList>
            <person name="Nelson K.E."/>
            <person name="Clayton R.A."/>
            <person name="Gill S.R."/>
            <person name="Gwinn M.L."/>
            <person name="Dodson R.J."/>
            <person name="Haft D.H."/>
            <person name="Hickey E.K."/>
            <person name="Peterson J.D."/>
            <person name="Nelson W.C."/>
            <person name="Ketchum K.A."/>
            <person name="McDonald L.A."/>
            <person name="Utterback T.R."/>
            <person name="Malek J.A."/>
            <person name="Linher K.D."/>
            <person name="Garrett M.M."/>
            <person name="Stewart A.M."/>
            <person name="Cotton M.D."/>
            <person name="Pratt M.S."/>
            <person name="Phillips C.A."/>
            <person name="Richardson D.L."/>
            <person name="Heidelberg J.F."/>
            <person name="Sutton G.G."/>
            <person name="Fleischmann R.D."/>
            <person name="Eisen J.A."/>
            <person name="White O."/>
            <person name="Salzberg S.L."/>
            <person name="Smith H.O."/>
            <person name="Venter J.C."/>
            <person name="Fraser C.M."/>
        </authorList>
    </citation>
    <scope>NUCLEOTIDE SEQUENCE [LARGE SCALE GENOMIC DNA]</scope>
    <source>
        <strain>ATCC 43589 / DSM 3109 / JCM 10099 / NBRC 100826 / MSB8</strain>
    </source>
</reference>
<reference key="2">
    <citation type="journal article" date="2006" name="Biochem. J.">
        <title>Dihydrodipicolinate synthase from Thermotoga maritima.</title>
        <authorList>
            <person name="Pearce F.G."/>
            <person name="Perugini M.A."/>
            <person name="McKerchar H.J."/>
            <person name="Gerrard J.A."/>
        </authorList>
    </citation>
    <scope>X-RAY CRYSTALLOGRAPHY (1.8 ANGSTROMS)</scope>
    <scope>FUNCTION</scope>
    <scope>BIOPHYSICOCHEMICAL PROPERTIES</scope>
    <scope>ACTIVITY REGULATION</scope>
    <scope>SUBUNIT</scope>
    <source>
        <strain>ATCC 43589 / DSM 3109 / JCM 10099 / NBRC 100826 / MSB8</strain>
    </source>
</reference>
<reference key="3">
    <citation type="journal article" date="2011" name="Biochim. Biophys. Acta">
        <title>Characterization of monomeric dihydrodipicolinate synthase variant reveals the importance of substrate binding in optimizing oligomerization.</title>
        <authorList>
            <person name="Pearce F.G."/>
            <person name="Dobson R.C."/>
            <person name="Jameson G.B."/>
            <person name="Perugini M.A."/>
            <person name="Gerrard J.A."/>
        </authorList>
    </citation>
    <scope>X-RAY CRYSTALLOGRAPHY (1.9 ANGSTROMS) OF MUTANT ALA-166/ALA-167/ALA-168 AND MUTANT ALA-233/ALA-237</scope>
    <scope>MUTAGENESIS OF 166-ASP--ASP-168</scope>
    <scope>KINETIC PARAMETERS</scope>
    <scope>SUBUNIT</scope>
    <source>
        <strain>ATCC 43589 / DSM 3109 / JCM 10099 / NBRC 100826 / MSB8</strain>
    </source>
</reference>
<accession>Q9X1K9</accession>
<comment type="function">
    <text evidence="5">Catalyzes the condensation of (S)-aspartate-beta-semialdehyde [(S)-ASA] and pyruvate to 4-hydroxy-tetrahydrodipicolinate (HTPA).</text>
</comment>
<comment type="catalytic activity">
    <reaction evidence="1">
        <text>L-aspartate 4-semialdehyde + pyruvate = (2S,4S)-4-hydroxy-2,3,4,5-tetrahydrodipicolinate + H2O + H(+)</text>
        <dbReference type="Rhea" id="RHEA:34171"/>
        <dbReference type="ChEBI" id="CHEBI:15361"/>
        <dbReference type="ChEBI" id="CHEBI:15377"/>
        <dbReference type="ChEBI" id="CHEBI:15378"/>
        <dbReference type="ChEBI" id="CHEBI:67139"/>
        <dbReference type="ChEBI" id="CHEBI:537519"/>
        <dbReference type="EC" id="4.3.3.7"/>
    </reaction>
</comment>
<comment type="activity regulation">
    <text evidence="2">Is not inhibited by (S)-lysine, in contrast to E.coli DapA.</text>
</comment>
<comment type="biophysicochemical properties">
    <kinetics>
        <KM evidence="2">0.053 mM for pyruvate (at 30 degrees Celsius)</KM>
        <KM evidence="3">0.08 mM for pyruvate (at 30 degrees Celsius)</KM>
        <KM evidence="3">0.15 mM for pyruvate (at 45 degrees Celsius)</KM>
        <KM evidence="2">0.16 mM for L-aspartate-4-semialdehyde (at 30 degrees Celsius)</KM>
        <KM evidence="3">0.23 mM for L-aspartate-4-semialdehyde (at 30 degrees Celsius)</KM>
        <KM evidence="3">0.36 mM for L-aspartate-4-semialdehyde (at 45 degrees Celsius)</KM>
        <Vmax evidence="2">1.01 umol/sec/mg enzyme (at 30 degrees Celsius)</Vmax>
        <text evidence="3">kcat is 136 sec(-1) and 465 sec(-1) at 30 and 45 degrees Celsius, respectively.</text>
    </kinetics>
    <temperatureDependence>
        <text evidence="2">Highly thermostable. Retains over 60% of the activity after 7 hours incubation at 90 degrees Celsius.</text>
    </temperatureDependence>
</comment>
<comment type="pathway">
    <text evidence="1">Amino-acid biosynthesis; L-lysine biosynthesis via DAP pathway; (S)-tetrahydrodipicolinate from L-aspartate: step 3/4.</text>
</comment>
<comment type="subunit">
    <text evidence="1 2 3">Homotetramer; dimer of dimers.</text>
</comment>
<comment type="subcellular location">
    <subcellularLocation>
        <location evidence="1">Cytoplasm</location>
    </subcellularLocation>
</comment>
<comment type="similarity">
    <text evidence="1">Belongs to the DapA family.</text>
</comment>
<comment type="caution">
    <text evidence="4">Was originally thought to be a dihydrodipicolinate synthase (DHDPS), catalyzing the condensation of (S)-aspartate-beta-semialdehyde [(S)-ASA] and pyruvate to dihydrodipicolinate (DHDP). However, it was shown in E.coli that the product of the enzymatic reaction is not dihydrodipicolinate but in fact (4S)-4-hydroxy-2,3,4,5-tetrahydro-(2S)-dipicolinic acid (HTPA), and that the consecutive dehydration reaction leading to DHDP is not spontaneous but catalyzed by DapB.</text>
</comment>
<organism>
    <name type="scientific">Thermotoga maritima (strain ATCC 43589 / DSM 3109 / JCM 10099 / NBRC 100826 / MSB8)</name>
    <dbReference type="NCBI Taxonomy" id="243274"/>
    <lineage>
        <taxon>Bacteria</taxon>
        <taxon>Thermotogati</taxon>
        <taxon>Thermotogota</taxon>
        <taxon>Thermotogae</taxon>
        <taxon>Thermotogales</taxon>
        <taxon>Thermotogaceae</taxon>
        <taxon>Thermotoga</taxon>
    </lineage>
</organism>
<gene>
    <name evidence="1" type="primary">dapA</name>
    <name type="ordered locus">TM_1521</name>
</gene>
<dbReference type="EC" id="4.3.3.7" evidence="1"/>
<dbReference type="EMBL" id="AE000512">
    <property type="protein sequence ID" value="AAD36588.1"/>
    <property type="molecule type" value="Genomic_DNA"/>
</dbReference>
<dbReference type="PIR" id="B72246">
    <property type="entry name" value="B72246"/>
</dbReference>
<dbReference type="RefSeq" id="NP_229321.1">
    <property type="nucleotide sequence ID" value="NC_000853.1"/>
</dbReference>
<dbReference type="RefSeq" id="WP_004081879.1">
    <property type="nucleotide sequence ID" value="NC_000853.1"/>
</dbReference>
<dbReference type="PDB" id="1O5K">
    <property type="method" value="X-ray"/>
    <property type="resolution" value="1.80 A"/>
    <property type="chains" value="A/B=1-294"/>
</dbReference>
<dbReference type="PDB" id="3PB0">
    <property type="method" value="X-ray"/>
    <property type="resolution" value="2.00 A"/>
    <property type="chains" value="A/B/C/D=1-294"/>
</dbReference>
<dbReference type="PDB" id="3PB2">
    <property type="method" value="X-ray"/>
    <property type="resolution" value="1.90 A"/>
    <property type="chains" value="A/B/C/D/E/F=1-294"/>
</dbReference>
<dbReference type="PDBsum" id="1O5K"/>
<dbReference type="PDBsum" id="3PB0"/>
<dbReference type="PDBsum" id="3PB2"/>
<dbReference type="SMR" id="Q9X1K9"/>
<dbReference type="FunCoup" id="Q9X1K9">
    <property type="interactions" value="249"/>
</dbReference>
<dbReference type="STRING" id="243274.TM_1521"/>
<dbReference type="DrugBank" id="DB02370">
    <property type="generic name" value="Nz-(1-Carboxyethyl)-Lysine"/>
</dbReference>
<dbReference type="PaxDb" id="243274-THEMA_06695"/>
<dbReference type="EnsemblBacteria" id="AAD36588">
    <property type="protein sequence ID" value="AAD36588"/>
    <property type="gene ID" value="TM_1521"/>
</dbReference>
<dbReference type="KEGG" id="tma:TM1521"/>
<dbReference type="KEGG" id="tmi:THEMA_06695"/>
<dbReference type="KEGG" id="tmm:Tmari_1529"/>
<dbReference type="KEGG" id="tmw:THMA_1553"/>
<dbReference type="eggNOG" id="COG0329">
    <property type="taxonomic scope" value="Bacteria"/>
</dbReference>
<dbReference type="InParanoid" id="Q9X1K9"/>
<dbReference type="OrthoDB" id="9782828at2"/>
<dbReference type="BRENDA" id="4.3.3.7">
    <property type="organism ID" value="6331"/>
</dbReference>
<dbReference type="UniPathway" id="UPA00034">
    <property type="reaction ID" value="UER00017"/>
</dbReference>
<dbReference type="EvolutionaryTrace" id="Q9X1K9"/>
<dbReference type="Proteomes" id="UP000008183">
    <property type="component" value="Chromosome"/>
</dbReference>
<dbReference type="GO" id="GO:0005829">
    <property type="term" value="C:cytosol"/>
    <property type="evidence" value="ECO:0000318"/>
    <property type="project" value="GO_Central"/>
</dbReference>
<dbReference type="GO" id="GO:0008840">
    <property type="term" value="F:4-hydroxy-tetrahydrodipicolinate synthase activity"/>
    <property type="evidence" value="ECO:0000318"/>
    <property type="project" value="GO_Central"/>
</dbReference>
<dbReference type="GO" id="GO:0019877">
    <property type="term" value="P:diaminopimelate biosynthetic process"/>
    <property type="evidence" value="ECO:0007669"/>
    <property type="project" value="UniProtKB-UniRule"/>
</dbReference>
<dbReference type="GO" id="GO:0009089">
    <property type="term" value="P:lysine biosynthetic process via diaminopimelate"/>
    <property type="evidence" value="ECO:0007669"/>
    <property type="project" value="UniProtKB-UniRule"/>
</dbReference>
<dbReference type="CDD" id="cd00950">
    <property type="entry name" value="DHDPS"/>
    <property type="match status" value="1"/>
</dbReference>
<dbReference type="Gene3D" id="3.20.20.70">
    <property type="entry name" value="Aldolase class I"/>
    <property type="match status" value="1"/>
</dbReference>
<dbReference type="HAMAP" id="MF_00418">
    <property type="entry name" value="DapA"/>
    <property type="match status" value="1"/>
</dbReference>
<dbReference type="InterPro" id="IPR013785">
    <property type="entry name" value="Aldolase_TIM"/>
</dbReference>
<dbReference type="InterPro" id="IPR005263">
    <property type="entry name" value="DapA"/>
</dbReference>
<dbReference type="InterPro" id="IPR002220">
    <property type="entry name" value="DapA-like"/>
</dbReference>
<dbReference type="InterPro" id="IPR020625">
    <property type="entry name" value="Schiff_base-form_aldolases_AS"/>
</dbReference>
<dbReference type="InterPro" id="IPR020624">
    <property type="entry name" value="Schiff_base-form_aldolases_CS"/>
</dbReference>
<dbReference type="NCBIfam" id="TIGR00674">
    <property type="entry name" value="dapA"/>
    <property type="match status" value="1"/>
</dbReference>
<dbReference type="PANTHER" id="PTHR12128:SF66">
    <property type="entry name" value="4-HYDROXY-2-OXOGLUTARATE ALDOLASE, MITOCHONDRIAL"/>
    <property type="match status" value="1"/>
</dbReference>
<dbReference type="PANTHER" id="PTHR12128">
    <property type="entry name" value="DIHYDRODIPICOLINATE SYNTHASE"/>
    <property type="match status" value="1"/>
</dbReference>
<dbReference type="Pfam" id="PF00701">
    <property type="entry name" value="DHDPS"/>
    <property type="match status" value="1"/>
</dbReference>
<dbReference type="PIRSF" id="PIRSF001365">
    <property type="entry name" value="DHDPS"/>
    <property type="match status" value="1"/>
</dbReference>
<dbReference type="PRINTS" id="PR00146">
    <property type="entry name" value="DHPICSNTHASE"/>
</dbReference>
<dbReference type="SMART" id="SM01130">
    <property type="entry name" value="DHDPS"/>
    <property type="match status" value="1"/>
</dbReference>
<dbReference type="SUPFAM" id="SSF51569">
    <property type="entry name" value="Aldolase"/>
    <property type="match status" value="1"/>
</dbReference>
<dbReference type="PROSITE" id="PS00665">
    <property type="entry name" value="DHDPS_1"/>
    <property type="match status" value="1"/>
</dbReference>
<dbReference type="PROSITE" id="PS00666">
    <property type="entry name" value="DHDPS_2"/>
    <property type="match status" value="1"/>
</dbReference>
<protein>
    <recommendedName>
        <fullName evidence="1">4-hydroxy-tetrahydrodipicolinate synthase</fullName>
        <shortName evidence="1">HTPA synthase</shortName>
        <ecNumber evidence="1">4.3.3.7</ecNumber>
    </recommendedName>
</protein>